<comment type="function">
    <text evidence="1">Sigma factors are initiation factors that promote the attachment of RNA polymerase to specific initiation sites and are then released. Sigma-S contributes to the protection against external stress, thus playing a role in cellular fitness and survival (By similarity).</text>
</comment>
<comment type="similarity">
    <text evidence="2">Belongs to the sigma-70 factor family.</text>
</comment>
<reference key="1">
    <citation type="journal article" date="2001" name="Lancet">
        <title>Whole genome sequencing of meticillin-resistant Staphylococcus aureus.</title>
        <authorList>
            <person name="Kuroda M."/>
            <person name="Ohta T."/>
            <person name="Uchiyama I."/>
            <person name="Baba T."/>
            <person name="Yuzawa H."/>
            <person name="Kobayashi I."/>
            <person name="Cui L."/>
            <person name="Oguchi A."/>
            <person name="Aoki K."/>
            <person name="Nagai Y."/>
            <person name="Lian J.-Q."/>
            <person name="Ito T."/>
            <person name="Kanamori M."/>
            <person name="Matsumaru H."/>
            <person name="Maruyama A."/>
            <person name="Murakami H."/>
            <person name="Hosoyama A."/>
            <person name="Mizutani-Ui Y."/>
            <person name="Takahashi N.K."/>
            <person name="Sawano T."/>
            <person name="Inoue R."/>
            <person name="Kaito C."/>
            <person name="Sekimizu K."/>
            <person name="Hirakawa H."/>
            <person name="Kuhara S."/>
            <person name="Goto S."/>
            <person name="Yabuzaki J."/>
            <person name="Kanehisa M."/>
            <person name="Yamashita A."/>
            <person name="Oshima K."/>
            <person name="Furuya K."/>
            <person name="Yoshino C."/>
            <person name="Shiba T."/>
            <person name="Hattori M."/>
            <person name="Ogasawara N."/>
            <person name="Hayashi H."/>
            <person name="Hiramatsu K."/>
        </authorList>
    </citation>
    <scope>NUCLEOTIDE SEQUENCE [LARGE SCALE GENOMIC DNA]</scope>
    <source>
        <strain>N315</strain>
    </source>
</reference>
<feature type="chain" id="PRO_0000367453" description="RNA polymerase sigma factor SigS">
    <location>
        <begin position="1"/>
        <end position="156"/>
    </location>
</feature>
<feature type="DNA-binding region" description="H-T-H motif" evidence="1">
    <location>
        <begin position="126"/>
        <end position="145"/>
    </location>
</feature>
<feature type="short sequence motif" description="Polymerase core binding">
    <location>
        <begin position="29"/>
        <end position="44"/>
    </location>
</feature>
<sequence>MKFNDVYNKHHKIIHHLLKKYNISYNYDEYYQLLLIKMWQLSQIYKPSSKQSLSSFLFTRLNYYLIDLFRQQNQLKDVILCENNSPTLTEQPTYFNEHDLRLQDIFKLLNHRERLWLKLYLEGYKQFEIAEIMSLSLSTIKLIKMSVKRKCQHNFN</sequence>
<gene>
    <name type="primary">sigS</name>
    <name type="ordered locus">SA1595</name>
</gene>
<evidence type="ECO:0000250" key="1"/>
<evidence type="ECO:0000305" key="2"/>
<proteinExistence type="inferred from homology"/>
<accession>Q7A505</accession>
<organism>
    <name type="scientific">Staphylococcus aureus (strain N315)</name>
    <dbReference type="NCBI Taxonomy" id="158879"/>
    <lineage>
        <taxon>Bacteria</taxon>
        <taxon>Bacillati</taxon>
        <taxon>Bacillota</taxon>
        <taxon>Bacilli</taxon>
        <taxon>Bacillales</taxon>
        <taxon>Staphylococcaceae</taxon>
        <taxon>Staphylococcus</taxon>
    </lineage>
</organism>
<keyword id="KW-0238">DNA-binding</keyword>
<keyword id="KW-0731">Sigma factor</keyword>
<keyword id="KW-0804">Transcription</keyword>
<keyword id="KW-0805">Transcription regulation</keyword>
<name>SIGS_STAAN</name>
<dbReference type="EMBL" id="BA000018">
    <property type="protein sequence ID" value="BAB42863.1"/>
    <property type="molecule type" value="Genomic_DNA"/>
</dbReference>
<dbReference type="PIR" id="B89963">
    <property type="entry name" value="B89963"/>
</dbReference>
<dbReference type="RefSeq" id="WP_000671057.1">
    <property type="nucleotide sequence ID" value="NC_002745.2"/>
</dbReference>
<dbReference type="SMR" id="Q7A505"/>
<dbReference type="EnsemblBacteria" id="BAB42863">
    <property type="protein sequence ID" value="BAB42863"/>
    <property type="gene ID" value="BAB42863"/>
</dbReference>
<dbReference type="KEGG" id="sau:SA1595"/>
<dbReference type="HOGENOM" id="CLU_047691_20_2_9"/>
<dbReference type="GO" id="GO:0003677">
    <property type="term" value="F:DNA binding"/>
    <property type="evidence" value="ECO:0007669"/>
    <property type="project" value="UniProtKB-KW"/>
</dbReference>
<dbReference type="GO" id="GO:0016987">
    <property type="term" value="F:sigma factor activity"/>
    <property type="evidence" value="ECO:0007669"/>
    <property type="project" value="UniProtKB-KW"/>
</dbReference>
<dbReference type="GO" id="GO:0006352">
    <property type="term" value="P:DNA-templated transcription initiation"/>
    <property type="evidence" value="ECO:0007669"/>
    <property type="project" value="InterPro"/>
</dbReference>
<dbReference type="Gene3D" id="1.10.10.10">
    <property type="entry name" value="Winged helix-like DNA-binding domain superfamily/Winged helix DNA-binding domain"/>
    <property type="match status" value="1"/>
</dbReference>
<dbReference type="InterPro" id="IPR014284">
    <property type="entry name" value="RNA_pol_sigma-70_dom"/>
</dbReference>
<dbReference type="InterPro" id="IPR007627">
    <property type="entry name" value="RNA_pol_sigma70_r2"/>
</dbReference>
<dbReference type="InterPro" id="IPR013325">
    <property type="entry name" value="RNA_pol_sigma_r2"/>
</dbReference>
<dbReference type="InterPro" id="IPR016032">
    <property type="entry name" value="Sig_transdc_resp-reg_C-effctor"/>
</dbReference>
<dbReference type="InterPro" id="IPR036388">
    <property type="entry name" value="WH-like_DNA-bd_sf"/>
</dbReference>
<dbReference type="NCBIfam" id="TIGR02937">
    <property type="entry name" value="sigma70-ECF"/>
    <property type="match status" value="1"/>
</dbReference>
<dbReference type="Pfam" id="PF04542">
    <property type="entry name" value="Sigma70_r2"/>
    <property type="match status" value="1"/>
</dbReference>
<dbReference type="SUPFAM" id="SSF46894">
    <property type="entry name" value="C-terminal effector domain of the bipartite response regulators"/>
    <property type="match status" value="1"/>
</dbReference>
<dbReference type="SUPFAM" id="SSF88946">
    <property type="entry name" value="Sigma2 domain of RNA polymerase sigma factors"/>
    <property type="match status" value="1"/>
</dbReference>
<protein>
    <recommendedName>
        <fullName>RNA polymerase sigma factor SigS</fullName>
    </recommendedName>
</protein>